<proteinExistence type="inferred from homology"/>
<sequence>MFLLHTMIRVGDLDKSLQFYCDILGMNLLRKKDYPSGEFTLAFVGYGKESENAVIELTHNWGTDKYDLGNGFGHIALGVEDIYSTCDKIRDKGGKVVREPGPMKHGTTVIAFVEDPDGYKIELIQTSSKKD</sequence>
<evidence type="ECO:0000250" key="1"/>
<evidence type="ECO:0000255" key="2">
    <source>
        <dbReference type="PROSITE-ProRule" id="PRU01163"/>
    </source>
</evidence>
<evidence type="ECO:0000305" key="3"/>
<feature type="chain" id="PRO_0000168096" description="Probable lactoylglutathione lyase">
    <location>
        <begin position="1"/>
        <end position="131"/>
    </location>
</feature>
<feature type="domain" description="VOC" evidence="2">
    <location>
        <begin position="2"/>
        <end position="126"/>
    </location>
</feature>
<feature type="active site" description="Proton donor/acceptor" evidence="1">
    <location>
        <position position="122"/>
    </location>
</feature>
<feature type="binding site" evidence="1">
    <location>
        <position position="5"/>
    </location>
    <ligand>
        <name>Ni(2+)</name>
        <dbReference type="ChEBI" id="CHEBI:49786"/>
    </ligand>
</feature>
<feature type="binding site" evidence="1">
    <location>
        <position position="9"/>
    </location>
    <ligand>
        <name>substrate</name>
    </ligand>
</feature>
<feature type="binding site" evidence="1">
    <location>
        <position position="56"/>
    </location>
    <ligand>
        <name>Ni(2+)</name>
        <dbReference type="ChEBI" id="CHEBI:49786"/>
    </ligand>
</feature>
<feature type="binding site" evidence="1">
    <location>
        <position position="60"/>
    </location>
    <ligand>
        <name>substrate</name>
    </ligand>
</feature>
<feature type="binding site" evidence="1">
    <location>
        <position position="74"/>
    </location>
    <ligand>
        <name>Ni(2+)</name>
        <dbReference type="ChEBI" id="CHEBI:49786"/>
    </ligand>
</feature>
<feature type="binding site" evidence="1">
    <location>
        <position position="74"/>
    </location>
    <ligand>
        <name>substrate</name>
    </ligand>
</feature>
<feature type="binding site" evidence="1">
    <location>
        <position position="122"/>
    </location>
    <ligand>
        <name>Ni(2+)</name>
        <dbReference type="ChEBI" id="CHEBI:49786"/>
    </ligand>
</feature>
<dbReference type="EC" id="4.4.1.5"/>
<dbReference type="EMBL" id="BA000022">
    <property type="protein sequence ID" value="BAA10101.1"/>
    <property type="molecule type" value="Genomic_DNA"/>
</dbReference>
<dbReference type="PIR" id="S76123">
    <property type="entry name" value="S76123"/>
</dbReference>
<dbReference type="SMR" id="Q55595"/>
<dbReference type="FunCoup" id="Q55595">
    <property type="interactions" value="333"/>
</dbReference>
<dbReference type="STRING" id="1148.gene:10499593"/>
<dbReference type="PaxDb" id="1148-1001475"/>
<dbReference type="EnsemblBacteria" id="BAA10101">
    <property type="protein sequence ID" value="BAA10101"/>
    <property type="gene ID" value="BAA10101"/>
</dbReference>
<dbReference type="KEGG" id="syn:slr0381"/>
<dbReference type="eggNOG" id="COG0346">
    <property type="taxonomic scope" value="Bacteria"/>
</dbReference>
<dbReference type="InParanoid" id="Q55595"/>
<dbReference type="PhylomeDB" id="Q55595"/>
<dbReference type="UniPathway" id="UPA00619">
    <property type="reaction ID" value="UER00675"/>
</dbReference>
<dbReference type="Proteomes" id="UP000001425">
    <property type="component" value="Chromosome"/>
</dbReference>
<dbReference type="GO" id="GO:0005737">
    <property type="term" value="C:cytoplasm"/>
    <property type="evidence" value="ECO:0000318"/>
    <property type="project" value="GO_Central"/>
</dbReference>
<dbReference type="GO" id="GO:0004462">
    <property type="term" value="F:lactoylglutathione lyase activity"/>
    <property type="evidence" value="ECO:0000318"/>
    <property type="project" value="GO_Central"/>
</dbReference>
<dbReference type="GO" id="GO:0046872">
    <property type="term" value="F:metal ion binding"/>
    <property type="evidence" value="ECO:0007669"/>
    <property type="project" value="UniProtKB-KW"/>
</dbReference>
<dbReference type="GO" id="GO:0019243">
    <property type="term" value="P:methylglyoxal catabolic process to D-lactate via S-lactoyl-glutathione"/>
    <property type="evidence" value="ECO:0000318"/>
    <property type="project" value="GO_Central"/>
</dbReference>
<dbReference type="CDD" id="cd16358">
    <property type="entry name" value="GlxI_Ni"/>
    <property type="match status" value="1"/>
</dbReference>
<dbReference type="Gene3D" id="3.10.180.10">
    <property type="entry name" value="2,3-Dihydroxybiphenyl 1,2-Dioxygenase, domain 1"/>
    <property type="match status" value="1"/>
</dbReference>
<dbReference type="InterPro" id="IPR029068">
    <property type="entry name" value="Glyas_Bleomycin-R_OHBP_Dase"/>
</dbReference>
<dbReference type="InterPro" id="IPR004360">
    <property type="entry name" value="Glyas_Fos-R_dOase_dom"/>
</dbReference>
<dbReference type="InterPro" id="IPR004361">
    <property type="entry name" value="Glyoxalase_1"/>
</dbReference>
<dbReference type="InterPro" id="IPR018146">
    <property type="entry name" value="Glyoxalase_1_CS"/>
</dbReference>
<dbReference type="InterPro" id="IPR037523">
    <property type="entry name" value="VOC"/>
</dbReference>
<dbReference type="NCBIfam" id="TIGR00068">
    <property type="entry name" value="glyox_I"/>
    <property type="match status" value="1"/>
</dbReference>
<dbReference type="PANTHER" id="PTHR46036">
    <property type="entry name" value="LACTOYLGLUTATHIONE LYASE"/>
    <property type="match status" value="1"/>
</dbReference>
<dbReference type="PANTHER" id="PTHR46036:SF5">
    <property type="entry name" value="LACTOYLGLUTATHIONE LYASE"/>
    <property type="match status" value="1"/>
</dbReference>
<dbReference type="Pfam" id="PF00903">
    <property type="entry name" value="Glyoxalase"/>
    <property type="match status" value="1"/>
</dbReference>
<dbReference type="SUPFAM" id="SSF54593">
    <property type="entry name" value="Glyoxalase/Bleomycin resistance protein/Dihydroxybiphenyl dioxygenase"/>
    <property type="match status" value="1"/>
</dbReference>
<dbReference type="PROSITE" id="PS00934">
    <property type="entry name" value="GLYOXALASE_I_1"/>
    <property type="match status" value="1"/>
</dbReference>
<dbReference type="PROSITE" id="PS00935">
    <property type="entry name" value="GLYOXALASE_I_2"/>
    <property type="match status" value="1"/>
</dbReference>
<dbReference type="PROSITE" id="PS51819">
    <property type="entry name" value="VOC"/>
    <property type="match status" value="1"/>
</dbReference>
<reference key="1">
    <citation type="journal article" date="1995" name="DNA Res.">
        <title>Sequence analysis of the genome of the unicellular cyanobacterium Synechocystis sp. strain PCC6803. I. Sequence features in the 1 Mb region from map positions 64% to 92% of the genome.</title>
        <authorList>
            <person name="Kaneko T."/>
            <person name="Tanaka A."/>
            <person name="Sato S."/>
            <person name="Kotani H."/>
            <person name="Sazuka T."/>
            <person name="Miyajima N."/>
            <person name="Sugiura M."/>
            <person name="Tabata S."/>
        </authorList>
    </citation>
    <scope>NUCLEOTIDE SEQUENCE [LARGE SCALE GENOMIC DNA]</scope>
    <source>
        <strain>ATCC 27184 / PCC 6803 / N-1</strain>
    </source>
</reference>
<reference key="2">
    <citation type="journal article" date="1996" name="DNA Res.">
        <title>Sequence analysis of the genome of the unicellular cyanobacterium Synechocystis sp. strain PCC6803. II. Sequence determination of the entire genome and assignment of potential protein-coding regions.</title>
        <authorList>
            <person name="Kaneko T."/>
            <person name="Sato S."/>
            <person name="Kotani H."/>
            <person name="Tanaka A."/>
            <person name="Asamizu E."/>
            <person name="Nakamura Y."/>
            <person name="Miyajima N."/>
            <person name="Hirosawa M."/>
            <person name="Sugiura M."/>
            <person name="Sasamoto S."/>
            <person name="Kimura T."/>
            <person name="Hosouchi T."/>
            <person name="Matsuno A."/>
            <person name="Muraki A."/>
            <person name="Nakazaki N."/>
            <person name="Naruo K."/>
            <person name="Okumura S."/>
            <person name="Shimpo S."/>
            <person name="Takeuchi C."/>
            <person name="Wada T."/>
            <person name="Watanabe A."/>
            <person name="Yamada M."/>
            <person name="Yasuda M."/>
            <person name="Tabata S."/>
        </authorList>
    </citation>
    <scope>NUCLEOTIDE SEQUENCE [LARGE SCALE GENOMIC DNA]</scope>
    <source>
        <strain>ATCC 27184 / PCC 6803 / Kazusa</strain>
    </source>
</reference>
<comment type="function">
    <text evidence="1">Catalyzes the conversion of hemimercaptal, formed from methylglyoxal and glutathione, to S-lactoylglutathione.</text>
</comment>
<comment type="catalytic activity">
    <reaction>
        <text>(R)-S-lactoylglutathione = methylglyoxal + glutathione</text>
        <dbReference type="Rhea" id="RHEA:19069"/>
        <dbReference type="ChEBI" id="CHEBI:17158"/>
        <dbReference type="ChEBI" id="CHEBI:57474"/>
        <dbReference type="ChEBI" id="CHEBI:57925"/>
        <dbReference type="EC" id="4.4.1.5"/>
    </reaction>
</comment>
<comment type="cofactor">
    <cofactor evidence="1">
        <name>Ni(2+)</name>
        <dbReference type="ChEBI" id="CHEBI:49786"/>
    </cofactor>
    <text evidence="1">Binds 1 nickel ion per subunit.</text>
</comment>
<comment type="pathway">
    <text>Secondary metabolite metabolism; methylglyoxal degradation; (R)-lactate from methylglyoxal: step 1/2.</text>
</comment>
<comment type="similarity">
    <text evidence="3">Belongs to the glyoxalase I family.</text>
</comment>
<name>LGUL_SYNY3</name>
<gene>
    <name type="primary">gloA</name>
    <name type="ordered locus">slr0381</name>
</gene>
<organism>
    <name type="scientific">Synechocystis sp. (strain ATCC 27184 / PCC 6803 / Kazusa)</name>
    <dbReference type="NCBI Taxonomy" id="1111708"/>
    <lineage>
        <taxon>Bacteria</taxon>
        <taxon>Bacillati</taxon>
        <taxon>Cyanobacteriota</taxon>
        <taxon>Cyanophyceae</taxon>
        <taxon>Synechococcales</taxon>
        <taxon>Merismopediaceae</taxon>
        <taxon>Synechocystis</taxon>
    </lineage>
</organism>
<keyword id="KW-0456">Lyase</keyword>
<keyword id="KW-0479">Metal-binding</keyword>
<keyword id="KW-0533">Nickel</keyword>
<keyword id="KW-1185">Reference proteome</keyword>
<protein>
    <recommendedName>
        <fullName>Probable lactoylglutathione lyase</fullName>
        <ecNumber>4.4.1.5</ecNumber>
    </recommendedName>
    <alternativeName>
        <fullName>Aldoketomutase</fullName>
    </alternativeName>
    <alternativeName>
        <fullName>Glyoxalase I</fullName>
        <shortName>Glx I</shortName>
    </alternativeName>
    <alternativeName>
        <fullName>Ketone-aldehyde mutase</fullName>
    </alternativeName>
    <alternativeName>
        <fullName>Methylglyoxalase</fullName>
    </alternativeName>
    <alternativeName>
        <fullName>S-D-lactoylglutathione methylglyoxal lyase</fullName>
    </alternativeName>
</protein>
<accession>Q55595</accession>